<gene>
    <name evidence="1" type="primary">ribH</name>
    <name type="ordered locus">Gbem_3021</name>
</gene>
<keyword id="KW-1185">Reference proteome</keyword>
<keyword id="KW-0686">Riboflavin biosynthesis</keyword>
<keyword id="KW-0808">Transferase</keyword>
<comment type="function">
    <text evidence="1">Catalyzes the formation of 6,7-dimethyl-8-ribityllumazine by condensation of 5-amino-6-(D-ribitylamino)uracil with 3,4-dihydroxy-2-butanone 4-phosphate. This is the penultimate step in the biosynthesis of riboflavin.</text>
</comment>
<comment type="catalytic activity">
    <reaction evidence="1">
        <text>(2S)-2-hydroxy-3-oxobutyl phosphate + 5-amino-6-(D-ribitylamino)uracil = 6,7-dimethyl-8-(1-D-ribityl)lumazine + phosphate + 2 H2O + H(+)</text>
        <dbReference type="Rhea" id="RHEA:26152"/>
        <dbReference type="ChEBI" id="CHEBI:15377"/>
        <dbReference type="ChEBI" id="CHEBI:15378"/>
        <dbReference type="ChEBI" id="CHEBI:15934"/>
        <dbReference type="ChEBI" id="CHEBI:43474"/>
        <dbReference type="ChEBI" id="CHEBI:58201"/>
        <dbReference type="ChEBI" id="CHEBI:58830"/>
        <dbReference type="EC" id="2.5.1.78"/>
    </reaction>
</comment>
<comment type="pathway">
    <text evidence="1">Cofactor biosynthesis; riboflavin biosynthesis; riboflavin from 2-hydroxy-3-oxobutyl phosphate and 5-amino-6-(D-ribitylamino)uracil: step 1/2.</text>
</comment>
<comment type="similarity">
    <text evidence="1">Belongs to the DMRL synthase family.</text>
</comment>
<accession>B5E854</accession>
<reference key="1">
    <citation type="submission" date="2008-07" db="EMBL/GenBank/DDBJ databases">
        <title>Complete sequence of Geobacter bemidjiensis BEM.</title>
        <authorList>
            <consortium name="US DOE Joint Genome Institute"/>
            <person name="Lucas S."/>
            <person name="Copeland A."/>
            <person name="Lapidus A."/>
            <person name="Glavina del Rio T."/>
            <person name="Dalin E."/>
            <person name="Tice H."/>
            <person name="Bruce D."/>
            <person name="Goodwin L."/>
            <person name="Pitluck S."/>
            <person name="Kiss H."/>
            <person name="Brettin T."/>
            <person name="Detter J.C."/>
            <person name="Han C."/>
            <person name="Kuske C.R."/>
            <person name="Schmutz J."/>
            <person name="Larimer F."/>
            <person name="Land M."/>
            <person name="Hauser L."/>
            <person name="Kyrpides N."/>
            <person name="Lykidis A."/>
            <person name="Lovley D."/>
            <person name="Richardson P."/>
        </authorList>
    </citation>
    <scope>NUCLEOTIDE SEQUENCE [LARGE SCALE GENOMIC DNA]</scope>
    <source>
        <strain>ATCC BAA-1014 / DSM 16622 / JCM 12645 / Bem</strain>
    </source>
</reference>
<sequence>MPKYVEGKLNAEGLRFGIVVGRFNSFIGERLLEGALDALLRHGANDAQITVVRVPGAFEIPLTAQKMAGSGNYDALICLGAVIRGSTPHFDYVSSEVSKGIAHVSLATGVPVAFGVLTTDTIEQAIERAGTKAGNKGFDAAMTVIEIANVFKEMK</sequence>
<evidence type="ECO:0000255" key="1">
    <source>
        <dbReference type="HAMAP-Rule" id="MF_00178"/>
    </source>
</evidence>
<organism>
    <name type="scientific">Citrifermentans bemidjiense (strain ATCC BAA-1014 / DSM 16622 / JCM 12645 / Bem)</name>
    <name type="common">Geobacter bemidjiensis</name>
    <dbReference type="NCBI Taxonomy" id="404380"/>
    <lineage>
        <taxon>Bacteria</taxon>
        <taxon>Pseudomonadati</taxon>
        <taxon>Thermodesulfobacteriota</taxon>
        <taxon>Desulfuromonadia</taxon>
        <taxon>Geobacterales</taxon>
        <taxon>Geobacteraceae</taxon>
        <taxon>Citrifermentans</taxon>
    </lineage>
</organism>
<name>RISB_CITBB</name>
<protein>
    <recommendedName>
        <fullName evidence="1">6,7-dimethyl-8-ribityllumazine synthase</fullName>
        <shortName evidence="1">DMRL synthase</shortName>
        <shortName evidence="1">LS</shortName>
        <shortName evidence="1">Lumazine synthase</shortName>
        <ecNumber evidence="1">2.5.1.78</ecNumber>
    </recommendedName>
</protein>
<feature type="chain" id="PRO_1000098193" description="6,7-dimethyl-8-ribityllumazine synthase">
    <location>
        <begin position="1"/>
        <end position="155"/>
    </location>
</feature>
<feature type="active site" description="Proton donor" evidence="1">
    <location>
        <position position="89"/>
    </location>
</feature>
<feature type="binding site" evidence="1">
    <location>
        <position position="23"/>
    </location>
    <ligand>
        <name>5-amino-6-(D-ribitylamino)uracil</name>
        <dbReference type="ChEBI" id="CHEBI:15934"/>
    </ligand>
</feature>
<feature type="binding site" evidence="1">
    <location>
        <begin position="57"/>
        <end position="59"/>
    </location>
    <ligand>
        <name>5-amino-6-(D-ribitylamino)uracil</name>
        <dbReference type="ChEBI" id="CHEBI:15934"/>
    </ligand>
</feature>
<feature type="binding site" evidence="1">
    <location>
        <begin position="81"/>
        <end position="83"/>
    </location>
    <ligand>
        <name>5-amino-6-(D-ribitylamino)uracil</name>
        <dbReference type="ChEBI" id="CHEBI:15934"/>
    </ligand>
</feature>
<feature type="binding site" evidence="1">
    <location>
        <begin position="86"/>
        <end position="87"/>
    </location>
    <ligand>
        <name>(2S)-2-hydroxy-3-oxobutyl phosphate</name>
        <dbReference type="ChEBI" id="CHEBI:58830"/>
    </ligand>
</feature>
<feature type="binding site" evidence="1">
    <location>
        <position position="114"/>
    </location>
    <ligand>
        <name>5-amino-6-(D-ribitylamino)uracil</name>
        <dbReference type="ChEBI" id="CHEBI:15934"/>
    </ligand>
</feature>
<feature type="binding site" evidence="1">
    <location>
        <position position="128"/>
    </location>
    <ligand>
        <name>(2S)-2-hydroxy-3-oxobutyl phosphate</name>
        <dbReference type="ChEBI" id="CHEBI:58830"/>
    </ligand>
</feature>
<dbReference type="EC" id="2.5.1.78" evidence="1"/>
<dbReference type="EMBL" id="CP001124">
    <property type="protein sequence ID" value="ACH40023.1"/>
    <property type="molecule type" value="Genomic_DNA"/>
</dbReference>
<dbReference type="RefSeq" id="WP_012531454.1">
    <property type="nucleotide sequence ID" value="NC_011146.1"/>
</dbReference>
<dbReference type="SMR" id="B5E854"/>
<dbReference type="STRING" id="404380.Gbem_3021"/>
<dbReference type="KEGG" id="gbm:Gbem_3021"/>
<dbReference type="eggNOG" id="COG0054">
    <property type="taxonomic scope" value="Bacteria"/>
</dbReference>
<dbReference type="HOGENOM" id="CLU_089358_1_1_7"/>
<dbReference type="OrthoDB" id="9809709at2"/>
<dbReference type="UniPathway" id="UPA00275">
    <property type="reaction ID" value="UER00404"/>
</dbReference>
<dbReference type="Proteomes" id="UP000008825">
    <property type="component" value="Chromosome"/>
</dbReference>
<dbReference type="GO" id="GO:0005829">
    <property type="term" value="C:cytosol"/>
    <property type="evidence" value="ECO:0007669"/>
    <property type="project" value="TreeGrafter"/>
</dbReference>
<dbReference type="GO" id="GO:0009349">
    <property type="term" value="C:riboflavin synthase complex"/>
    <property type="evidence" value="ECO:0007669"/>
    <property type="project" value="InterPro"/>
</dbReference>
<dbReference type="GO" id="GO:0000906">
    <property type="term" value="F:6,7-dimethyl-8-ribityllumazine synthase activity"/>
    <property type="evidence" value="ECO:0007669"/>
    <property type="project" value="UniProtKB-UniRule"/>
</dbReference>
<dbReference type="GO" id="GO:0009231">
    <property type="term" value="P:riboflavin biosynthetic process"/>
    <property type="evidence" value="ECO:0007669"/>
    <property type="project" value="UniProtKB-UniRule"/>
</dbReference>
<dbReference type="CDD" id="cd09209">
    <property type="entry name" value="Lumazine_synthase-I"/>
    <property type="match status" value="1"/>
</dbReference>
<dbReference type="FunFam" id="3.40.50.960:FF:000001">
    <property type="entry name" value="6,7-dimethyl-8-ribityllumazine synthase"/>
    <property type="match status" value="1"/>
</dbReference>
<dbReference type="Gene3D" id="3.40.50.960">
    <property type="entry name" value="Lumazine/riboflavin synthase"/>
    <property type="match status" value="1"/>
</dbReference>
<dbReference type="HAMAP" id="MF_00178">
    <property type="entry name" value="Lumazine_synth"/>
    <property type="match status" value="1"/>
</dbReference>
<dbReference type="InterPro" id="IPR034964">
    <property type="entry name" value="LS"/>
</dbReference>
<dbReference type="InterPro" id="IPR002180">
    <property type="entry name" value="LS/RS"/>
</dbReference>
<dbReference type="InterPro" id="IPR036467">
    <property type="entry name" value="LS/RS_sf"/>
</dbReference>
<dbReference type="NCBIfam" id="TIGR00114">
    <property type="entry name" value="lumazine-synth"/>
    <property type="match status" value="1"/>
</dbReference>
<dbReference type="NCBIfam" id="NF000812">
    <property type="entry name" value="PRK00061.1-4"/>
    <property type="match status" value="1"/>
</dbReference>
<dbReference type="PANTHER" id="PTHR21058:SF0">
    <property type="entry name" value="6,7-DIMETHYL-8-RIBITYLLUMAZINE SYNTHASE"/>
    <property type="match status" value="1"/>
</dbReference>
<dbReference type="PANTHER" id="PTHR21058">
    <property type="entry name" value="6,7-DIMETHYL-8-RIBITYLLUMAZINE SYNTHASE DMRL SYNTHASE LUMAZINE SYNTHASE"/>
    <property type="match status" value="1"/>
</dbReference>
<dbReference type="Pfam" id="PF00885">
    <property type="entry name" value="DMRL_synthase"/>
    <property type="match status" value="1"/>
</dbReference>
<dbReference type="SUPFAM" id="SSF52121">
    <property type="entry name" value="Lumazine synthase"/>
    <property type="match status" value="1"/>
</dbReference>
<proteinExistence type="inferred from homology"/>